<proteinExistence type="evidence at transcript level"/>
<name>SPL17_ORYSJ</name>
<organism>
    <name type="scientific">Oryza sativa subsp. japonica</name>
    <name type="common">Rice</name>
    <dbReference type="NCBI Taxonomy" id="39947"/>
    <lineage>
        <taxon>Eukaryota</taxon>
        <taxon>Viridiplantae</taxon>
        <taxon>Streptophyta</taxon>
        <taxon>Embryophyta</taxon>
        <taxon>Tracheophyta</taxon>
        <taxon>Spermatophyta</taxon>
        <taxon>Magnoliopsida</taxon>
        <taxon>Liliopsida</taxon>
        <taxon>Poales</taxon>
        <taxon>Poaceae</taxon>
        <taxon>BOP clade</taxon>
        <taxon>Oryzoideae</taxon>
        <taxon>Oryzeae</taxon>
        <taxon>Oryzinae</taxon>
        <taxon>Oryza</taxon>
        <taxon>Oryza sativa</taxon>
    </lineage>
</organism>
<gene>
    <name type="primary">SPL17</name>
    <name type="ordered locus">Os09g0491532</name>
    <name type="ordered locus">LOC_Os09g31438</name>
    <name type="ORF">OsJ_028679</name>
</gene>
<reference key="1">
    <citation type="journal article" date="2005" name="Nature">
        <title>The map-based sequence of the rice genome.</title>
        <authorList>
            <consortium name="International rice genome sequencing project (IRGSP)"/>
        </authorList>
    </citation>
    <scope>NUCLEOTIDE SEQUENCE [LARGE SCALE GENOMIC DNA]</scope>
    <source>
        <strain>cv. Nipponbare</strain>
    </source>
</reference>
<reference key="2">
    <citation type="journal article" date="2013" name="Rice">
        <title>Improvement of the Oryza sativa Nipponbare reference genome using next generation sequence and optical map data.</title>
        <authorList>
            <person name="Kawahara Y."/>
            <person name="de la Bastide M."/>
            <person name="Hamilton J.P."/>
            <person name="Kanamori H."/>
            <person name="McCombie W.R."/>
            <person name="Ouyang S."/>
            <person name="Schwartz D.C."/>
            <person name="Tanaka T."/>
            <person name="Wu J."/>
            <person name="Zhou S."/>
            <person name="Childs K.L."/>
            <person name="Davidson R.M."/>
            <person name="Lin H."/>
            <person name="Quesada-Ocampo L."/>
            <person name="Vaillancourt B."/>
            <person name="Sakai H."/>
            <person name="Lee S.S."/>
            <person name="Kim J."/>
            <person name="Numa H."/>
            <person name="Itoh T."/>
            <person name="Buell C.R."/>
            <person name="Matsumoto T."/>
        </authorList>
    </citation>
    <scope>GENOME REANNOTATION</scope>
    <source>
        <strain>cv. Nipponbare</strain>
    </source>
</reference>
<reference key="3">
    <citation type="journal article" date="2005" name="PLoS Biol.">
        <title>The genomes of Oryza sativa: a history of duplications.</title>
        <authorList>
            <person name="Yu J."/>
            <person name="Wang J."/>
            <person name="Lin W."/>
            <person name="Li S."/>
            <person name="Li H."/>
            <person name="Zhou J."/>
            <person name="Ni P."/>
            <person name="Dong W."/>
            <person name="Hu S."/>
            <person name="Zeng C."/>
            <person name="Zhang J."/>
            <person name="Zhang Y."/>
            <person name="Li R."/>
            <person name="Xu Z."/>
            <person name="Li S."/>
            <person name="Li X."/>
            <person name="Zheng H."/>
            <person name="Cong L."/>
            <person name="Lin L."/>
            <person name="Yin J."/>
            <person name="Geng J."/>
            <person name="Li G."/>
            <person name="Shi J."/>
            <person name="Liu J."/>
            <person name="Lv H."/>
            <person name="Li J."/>
            <person name="Wang J."/>
            <person name="Deng Y."/>
            <person name="Ran L."/>
            <person name="Shi X."/>
            <person name="Wang X."/>
            <person name="Wu Q."/>
            <person name="Li C."/>
            <person name="Ren X."/>
            <person name="Wang J."/>
            <person name="Wang X."/>
            <person name="Li D."/>
            <person name="Liu D."/>
            <person name="Zhang X."/>
            <person name="Ji Z."/>
            <person name="Zhao W."/>
            <person name="Sun Y."/>
            <person name="Zhang Z."/>
            <person name="Bao J."/>
            <person name="Han Y."/>
            <person name="Dong L."/>
            <person name="Ji J."/>
            <person name="Chen P."/>
            <person name="Wu S."/>
            <person name="Liu J."/>
            <person name="Xiao Y."/>
            <person name="Bu D."/>
            <person name="Tan J."/>
            <person name="Yang L."/>
            <person name="Ye C."/>
            <person name="Zhang J."/>
            <person name="Xu J."/>
            <person name="Zhou Y."/>
            <person name="Yu Y."/>
            <person name="Zhang B."/>
            <person name="Zhuang S."/>
            <person name="Wei H."/>
            <person name="Liu B."/>
            <person name="Lei M."/>
            <person name="Yu H."/>
            <person name="Li Y."/>
            <person name="Xu H."/>
            <person name="Wei S."/>
            <person name="He X."/>
            <person name="Fang L."/>
            <person name="Zhang Z."/>
            <person name="Zhang Y."/>
            <person name="Huang X."/>
            <person name="Su Z."/>
            <person name="Tong W."/>
            <person name="Li J."/>
            <person name="Tong Z."/>
            <person name="Li S."/>
            <person name="Ye J."/>
            <person name="Wang L."/>
            <person name="Fang L."/>
            <person name="Lei T."/>
            <person name="Chen C.-S."/>
            <person name="Chen H.-C."/>
            <person name="Xu Z."/>
            <person name="Li H."/>
            <person name="Huang H."/>
            <person name="Zhang F."/>
            <person name="Xu H."/>
            <person name="Li N."/>
            <person name="Zhao C."/>
            <person name="Li S."/>
            <person name="Dong L."/>
            <person name="Huang Y."/>
            <person name="Li L."/>
            <person name="Xi Y."/>
            <person name="Qi Q."/>
            <person name="Li W."/>
            <person name="Zhang B."/>
            <person name="Hu W."/>
            <person name="Zhang Y."/>
            <person name="Tian X."/>
            <person name="Jiao Y."/>
            <person name="Liang X."/>
            <person name="Jin J."/>
            <person name="Gao L."/>
            <person name="Zheng W."/>
            <person name="Hao B."/>
            <person name="Liu S.-M."/>
            <person name="Wang W."/>
            <person name="Yuan L."/>
            <person name="Cao M."/>
            <person name="McDermott J."/>
            <person name="Samudrala R."/>
            <person name="Wang J."/>
            <person name="Wong G.K.-S."/>
            <person name="Yang H."/>
        </authorList>
    </citation>
    <scope>NUCLEOTIDE SEQUENCE [LARGE SCALE GENOMIC DNA]</scope>
    <source>
        <strain>cv. Nipponbare</strain>
    </source>
</reference>
<reference key="4">
    <citation type="journal article" date="2006" name="Plant Physiol.">
        <title>Genomic organization, differential expression, and interaction of SQUAMOSA promoter-binding-like transcription factors and microRNA156 in rice.</title>
        <authorList>
            <person name="Xie K."/>
            <person name="Wu C."/>
            <person name="Xiong L."/>
        </authorList>
    </citation>
    <scope>TISSUE SPECIFICITY</scope>
    <scope>INDUCTION</scope>
    <scope>GENE FAMILY</scope>
    <scope>NOMENCLATURE</scope>
</reference>
<reference key="5">
    <citation type="journal article" date="2008" name="Gene">
        <title>Comparative study of SBP-box gene family in Arabidopsis and rice.</title>
        <authorList>
            <person name="Yang Z."/>
            <person name="Wang X."/>
            <person name="Gu S."/>
            <person name="Hu Z."/>
            <person name="Xu H."/>
            <person name="Xu C."/>
        </authorList>
    </citation>
    <scope>GENE FAMILY</scope>
</reference>
<feature type="chain" id="PRO_0000308245" description="Squamosa promoter-binding-like protein 17">
    <location>
        <begin position="1"/>
        <end position="393"/>
    </location>
</feature>
<feature type="zinc finger region" description="SBP-type" evidence="3">
    <location>
        <begin position="71"/>
        <end position="148"/>
    </location>
</feature>
<feature type="region of interest" description="Disordered" evidence="4">
    <location>
        <begin position="40"/>
        <end position="67"/>
    </location>
</feature>
<feature type="region of interest" description="Disordered" evidence="4">
    <location>
        <begin position="137"/>
        <end position="158"/>
    </location>
</feature>
<feature type="region of interest" description="Disordered" evidence="4">
    <location>
        <begin position="273"/>
        <end position="301"/>
    </location>
</feature>
<feature type="region of interest" description="Disordered" evidence="4">
    <location>
        <begin position="317"/>
        <end position="393"/>
    </location>
</feature>
<feature type="short sequence motif" description="Bipartite nuclear localization signal" evidence="2">
    <location>
        <begin position="131"/>
        <end position="147"/>
    </location>
</feature>
<feature type="compositionally biased region" description="Low complexity" evidence="4">
    <location>
        <begin position="40"/>
        <end position="49"/>
    </location>
</feature>
<feature type="compositionally biased region" description="Basic residues" evidence="4">
    <location>
        <begin position="137"/>
        <end position="148"/>
    </location>
</feature>
<feature type="compositionally biased region" description="Polar residues" evidence="4">
    <location>
        <begin position="273"/>
        <end position="293"/>
    </location>
</feature>
<feature type="compositionally biased region" description="Polar residues" evidence="4">
    <location>
        <begin position="380"/>
        <end position="393"/>
    </location>
</feature>
<feature type="binding site" evidence="3">
    <location>
        <position position="74"/>
    </location>
    <ligand>
        <name>Zn(2+)</name>
        <dbReference type="ChEBI" id="CHEBI:29105"/>
        <label>1</label>
    </ligand>
</feature>
<feature type="binding site" evidence="3">
    <location>
        <position position="79"/>
    </location>
    <ligand>
        <name>Zn(2+)</name>
        <dbReference type="ChEBI" id="CHEBI:29105"/>
        <label>1</label>
    </ligand>
</feature>
<feature type="binding site" evidence="3">
    <location>
        <position position="96"/>
    </location>
    <ligand>
        <name>Zn(2+)</name>
        <dbReference type="ChEBI" id="CHEBI:29105"/>
        <label>1</label>
    </ligand>
</feature>
<feature type="binding site" evidence="3">
    <location>
        <position position="99"/>
    </location>
    <ligand>
        <name>Zn(2+)</name>
        <dbReference type="ChEBI" id="CHEBI:29105"/>
        <label>1</label>
    </ligand>
</feature>
<feature type="binding site" evidence="3">
    <location>
        <position position="115"/>
    </location>
    <ligand>
        <name>Zn(2+)</name>
        <dbReference type="ChEBI" id="CHEBI:29105"/>
        <label>2</label>
    </ligand>
</feature>
<feature type="binding site" evidence="3">
    <location>
        <position position="118"/>
    </location>
    <ligand>
        <name>Zn(2+)</name>
        <dbReference type="ChEBI" id="CHEBI:29105"/>
        <label>2</label>
    </ligand>
</feature>
<feature type="binding site" evidence="3">
    <location>
        <position position="122"/>
    </location>
    <ligand>
        <name>Zn(2+)</name>
        <dbReference type="ChEBI" id="CHEBI:29105"/>
        <label>2</label>
    </ligand>
</feature>
<feature type="binding site" evidence="3">
    <location>
        <position position="134"/>
    </location>
    <ligand>
        <name>Zn(2+)</name>
        <dbReference type="ChEBI" id="CHEBI:29105"/>
        <label>2</label>
    </ligand>
</feature>
<feature type="sequence conflict" description="In Ref. 1; CM000146." evidence="6" ref="1">
    <original>V</original>
    <variation>L</variation>
    <location>
        <position position="60"/>
    </location>
</feature>
<sequence>MATGGSGGGGGGGGGGDDVHGLKFGKKIYFEQDAAASASAAAVESSSTSSGGGGKKGKGVAAAAAPPPPLPPRCQVEGCGVDLSGVKPYYCRHKVCYMHAKEPIVVVAGLEQRFCQQCSRFHQLPEFDQEKKSCRRRLAGHNERRRKPTPGPLSSRYGRLAASFHEEPGRSRSFVVDFSYPRVPSSVRDAWPAIQPSDRMSGSIQWQGGHELHPHRSAVAGYSDHHAFSSHGGSAAGAPMLHHPAFELTSGGCLAGVATDSSCALSLLSTQPWDTTQSTSSHNRSPPMSSTASAFGGGNNPVSPSVMASNYMAASPGWNSSSRGHDGARNVHLPPPHGVVLNEVPPGSVHHGHFSGELELALQGGAPSNRPEAEHGSGSGAFSHSTNAMNWSL</sequence>
<comment type="function">
    <text evidence="1">Trans-acting factor that binds specifically to the consensus nucleotide sequence 5'-TNCGTACAA-3' (By similarity). May be involved in panicle development.</text>
</comment>
<comment type="subcellular location">
    <subcellularLocation>
        <location evidence="6">Nucleus</location>
    </subcellularLocation>
</comment>
<comment type="tissue specificity">
    <text evidence="5">Expressed in young panicles.</text>
</comment>
<comment type="induction">
    <text evidence="7">Negatively regulated by microRNAs miR156b and miR156h.</text>
</comment>
<comment type="domain">
    <text evidence="1">The SBP-type zinc finger is required for the binding to DNA.</text>
</comment>
<protein>
    <recommendedName>
        <fullName>Squamosa promoter-binding-like protein 17</fullName>
    </recommendedName>
</protein>
<evidence type="ECO:0000250" key="1"/>
<evidence type="ECO:0000255" key="2"/>
<evidence type="ECO:0000255" key="3">
    <source>
        <dbReference type="PROSITE-ProRule" id="PRU00470"/>
    </source>
</evidence>
<evidence type="ECO:0000256" key="4">
    <source>
        <dbReference type="SAM" id="MobiDB-lite"/>
    </source>
</evidence>
<evidence type="ECO:0000269" key="5">
    <source>
    </source>
</evidence>
<evidence type="ECO:0000305" key="6"/>
<evidence type="ECO:0000305" key="7">
    <source>
    </source>
</evidence>
<accession>A3C057</accession>
<keyword id="KW-0238">DNA-binding</keyword>
<keyword id="KW-0479">Metal-binding</keyword>
<keyword id="KW-0539">Nucleus</keyword>
<keyword id="KW-1185">Reference proteome</keyword>
<keyword id="KW-0804">Transcription</keyword>
<keyword id="KW-0805">Transcription regulation</keyword>
<keyword id="KW-0862">Zinc</keyword>
<keyword id="KW-0863">Zinc-finger</keyword>
<dbReference type="EMBL" id="AC108762">
    <property type="status" value="NOT_ANNOTATED_CDS"/>
    <property type="molecule type" value="Genomic_DNA"/>
</dbReference>
<dbReference type="EMBL" id="AP014965">
    <property type="status" value="NOT_ANNOTATED_CDS"/>
    <property type="molecule type" value="Genomic_DNA"/>
</dbReference>
<dbReference type="EMBL" id="CM000146">
    <property type="status" value="NOT_ANNOTATED_CDS"/>
    <property type="molecule type" value="Genomic_DNA"/>
</dbReference>
<dbReference type="SMR" id="A3C057"/>
<dbReference type="FunCoup" id="A3C057">
    <property type="interactions" value="856"/>
</dbReference>
<dbReference type="STRING" id="39947.A3C057"/>
<dbReference type="PaxDb" id="39947-A3C057"/>
<dbReference type="GeneID" id="9266075"/>
<dbReference type="KEGG" id="osa:9266075"/>
<dbReference type="eggNOG" id="ENOG502QPVZ">
    <property type="taxonomic scope" value="Eukaryota"/>
</dbReference>
<dbReference type="InParanoid" id="A3C057"/>
<dbReference type="OrthoDB" id="514967at2759"/>
<dbReference type="PlantReactome" id="R-OSA-9608575">
    <property type="pathway name" value="Reproductive meristem phase change"/>
</dbReference>
<dbReference type="Proteomes" id="UP000000763">
    <property type="component" value="Chromosome 9"/>
</dbReference>
<dbReference type="Proteomes" id="UP000007752">
    <property type="component" value="Chromosome 9"/>
</dbReference>
<dbReference type="Proteomes" id="UP000059680">
    <property type="component" value="Chromosome 9"/>
</dbReference>
<dbReference type="GO" id="GO:0005634">
    <property type="term" value="C:nucleus"/>
    <property type="evidence" value="ECO:0007669"/>
    <property type="project" value="UniProtKB-SubCell"/>
</dbReference>
<dbReference type="GO" id="GO:0003677">
    <property type="term" value="F:DNA binding"/>
    <property type="evidence" value="ECO:0007669"/>
    <property type="project" value="UniProtKB-KW"/>
</dbReference>
<dbReference type="GO" id="GO:0008270">
    <property type="term" value="F:zinc ion binding"/>
    <property type="evidence" value="ECO:0007669"/>
    <property type="project" value="UniProtKB-KW"/>
</dbReference>
<dbReference type="FunFam" id="4.10.1100.10:FF:000001">
    <property type="entry name" value="Squamosa promoter-binding-like protein 14"/>
    <property type="match status" value="1"/>
</dbReference>
<dbReference type="Gene3D" id="4.10.1100.10">
    <property type="entry name" value="Transcription factor, SBP-box domain"/>
    <property type="match status" value="1"/>
</dbReference>
<dbReference type="InterPro" id="IPR044817">
    <property type="entry name" value="SBP-like"/>
</dbReference>
<dbReference type="InterPro" id="IPR004333">
    <property type="entry name" value="SBP_dom"/>
</dbReference>
<dbReference type="InterPro" id="IPR036893">
    <property type="entry name" value="SBP_sf"/>
</dbReference>
<dbReference type="PANTHER" id="PTHR31251">
    <property type="entry name" value="SQUAMOSA PROMOTER-BINDING-LIKE PROTEIN 4"/>
    <property type="match status" value="1"/>
</dbReference>
<dbReference type="PANTHER" id="PTHR31251:SF226">
    <property type="entry name" value="SQUAMOSA PROMOTER-BINDING-LIKE PROTEIN 6"/>
    <property type="match status" value="1"/>
</dbReference>
<dbReference type="Pfam" id="PF03110">
    <property type="entry name" value="SBP"/>
    <property type="match status" value="1"/>
</dbReference>
<dbReference type="SUPFAM" id="SSF103612">
    <property type="entry name" value="SBT domain"/>
    <property type="match status" value="1"/>
</dbReference>
<dbReference type="PROSITE" id="PS51141">
    <property type="entry name" value="ZF_SBP"/>
    <property type="match status" value="1"/>
</dbReference>